<accession>Q0SN21</accession>
<accession>G0ISD0</accession>
<keyword id="KW-0687">Ribonucleoprotein</keyword>
<keyword id="KW-0689">Ribosomal protein</keyword>
<protein>
    <recommendedName>
        <fullName evidence="1">Large ribosomal subunit protein uL29</fullName>
    </recommendedName>
    <alternativeName>
        <fullName evidence="2">50S ribosomal protein L29</fullName>
    </alternativeName>
</protein>
<name>RL29_BORAP</name>
<proteinExistence type="inferred from homology"/>
<dbReference type="EMBL" id="CP000395">
    <property type="protein sequence ID" value="ABH01757.1"/>
    <property type="molecule type" value="Genomic_DNA"/>
</dbReference>
<dbReference type="EMBL" id="CP002933">
    <property type="protein sequence ID" value="AEL69711.1"/>
    <property type="molecule type" value="Genomic_DNA"/>
</dbReference>
<dbReference type="RefSeq" id="WP_004789447.1">
    <property type="nucleotide sequence ID" value="NZ_CP160066.1"/>
</dbReference>
<dbReference type="SMR" id="Q0SN21"/>
<dbReference type="STRING" id="29518.BLA32_01830"/>
<dbReference type="GeneID" id="77265333"/>
<dbReference type="KEGG" id="baf:BAPKO_0514"/>
<dbReference type="KEGG" id="bafz:BafPKo_0503"/>
<dbReference type="PATRIC" id="fig|390236.22.peg.483"/>
<dbReference type="eggNOG" id="COG0255">
    <property type="taxonomic scope" value="Bacteria"/>
</dbReference>
<dbReference type="HOGENOM" id="CLU_158491_5_0_12"/>
<dbReference type="OrthoDB" id="371096at2"/>
<dbReference type="Proteomes" id="UP000005216">
    <property type="component" value="Chromosome"/>
</dbReference>
<dbReference type="GO" id="GO:1990904">
    <property type="term" value="C:ribonucleoprotein complex"/>
    <property type="evidence" value="ECO:0007669"/>
    <property type="project" value="UniProtKB-KW"/>
</dbReference>
<dbReference type="GO" id="GO:0005840">
    <property type="term" value="C:ribosome"/>
    <property type="evidence" value="ECO:0007669"/>
    <property type="project" value="UniProtKB-KW"/>
</dbReference>
<dbReference type="GO" id="GO:0003735">
    <property type="term" value="F:structural constituent of ribosome"/>
    <property type="evidence" value="ECO:0007669"/>
    <property type="project" value="InterPro"/>
</dbReference>
<dbReference type="GO" id="GO:0006412">
    <property type="term" value="P:translation"/>
    <property type="evidence" value="ECO:0007669"/>
    <property type="project" value="UniProtKB-UniRule"/>
</dbReference>
<dbReference type="CDD" id="cd00427">
    <property type="entry name" value="Ribosomal_L29_HIP"/>
    <property type="match status" value="1"/>
</dbReference>
<dbReference type="Gene3D" id="1.10.287.310">
    <property type="match status" value="1"/>
</dbReference>
<dbReference type="HAMAP" id="MF_00374">
    <property type="entry name" value="Ribosomal_uL29"/>
    <property type="match status" value="1"/>
</dbReference>
<dbReference type="InterPro" id="IPR001854">
    <property type="entry name" value="Ribosomal_uL29"/>
</dbReference>
<dbReference type="InterPro" id="IPR036049">
    <property type="entry name" value="Ribosomal_uL29_sf"/>
</dbReference>
<dbReference type="NCBIfam" id="TIGR00012">
    <property type="entry name" value="L29"/>
    <property type="match status" value="1"/>
</dbReference>
<dbReference type="Pfam" id="PF00831">
    <property type="entry name" value="Ribosomal_L29"/>
    <property type="match status" value="1"/>
</dbReference>
<dbReference type="SUPFAM" id="SSF46561">
    <property type="entry name" value="Ribosomal protein L29 (L29p)"/>
    <property type="match status" value="1"/>
</dbReference>
<gene>
    <name evidence="1" type="primary">rpmC</name>
    <name type="ordered locus">BAPKO_0514</name>
    <name type="ordered locus">BafPKo_0503</name>
</gene>
<sequence length="66" mass="8010">MLKNFKNFTLEDMKAKRLELKKEYLDLRFKSVVGHVENPLKKREIRRDIARLNTMICEYKLGIRKV</sequence>
<comment type="similarity">
    <text evidence="1">Belongs to the universal ribosomal protein uL29 family.</text>
</comment>
<feature type="chain" id="PRO_1000007421" description="Large ribosomal subunit protein uL29">
    <location>
        <begin position="1"/>
        <end position="66"/>
    </location>
</feature>
<organism>
    <name type="scientific">Borreliella afzelii (strain PKo)</name>
    <name type="common">Borrelia afzelii</name>
    <dbReference type="NCBI Taxonomy" id="390236"/>
    <lineage>
        <taxon>Bacteria</taxon>
        <taxon>Pseudomonadati</taxon>
        <taxon>Spirochaetota</taxon>
        <taxon>Spirochaetia</taxon>
        <taxon>Spirochaetales</taxon>
        <taxon>Borreliaceae</taxon>
        <taxon>Borreliella</taxon>
    </lineage>
</organism>
<reference key="1">
    <citation type="journal article" date="2006" name="BMC Genomics">
        <title>Comparative genome analysis: selection pressure on the Borrelia vls cassettes is essential for infectivity.</title>
        <authorList>
            <person name="Gloeckner G."/>
            <person name="Schulte-Spechtel U."/>
            <person name="Schilhabel M."/>
            <person name="Felder M."/>
            <person name="Suehnel J."/>
            <person name="Wilske B."/>
            <person name="Platzer M."/>
        </authorList>
    </citation>
    <scope>NUCLEOTIDE SEQUENCE [LARGE SCALE GENOMIC DNA]</scope>
    <source>
        <strain>PKo</strain>
    </source>
</reference>
<reference key="2">
    <citation type="journal article" date="2011" name="J. Bacteriol.">
        <title>Whole-genome sequences of two Borrelia afzelii and two Borrelia garinii Lyme disease agent isolates.</title>
        <authorList>
            <person name="Casjens S.R."/>
            <person name="Mongodin E.F."/>
            <person name="Qiu W.G."/>
            <person name="Dunn J.J."/>
            <person name="Luft B.J."/>
            <person name="Fraser-Liggett C.M."/>
            <person name="Schutzer S.E."/>
        </authorList>
    </citation>
    <scope>NUCLEOTIDE SEQUENCE [LARGE SCALE GENOMIC DNA]</scope>
    <source>
        <strain>PKo</strain>
    </source>
</reference>
<evidence type="ECO:0000255" key="1">
    <source>
        <dbReference type="HAMAP-Rule" id="MF_00374"/>
    </source>
</evidence>
<evidence type="ECO:0000305" key="2"/>